<accession>Q5SR56</accession>
<accession>B4DUE6</accession>
<accession>E9PD58</accession>
<accession>Q3KQT4</accession>
<accession>Q53GU5</accession>
<accession>Q8WU95</accession>
<accession>Q96SM4</accession>
<feature type="chain" id="PRO_0000239229" description="Hippocampus abundant transcript-like protein 1">
    <location>
        <begin position="1"/>
        <end position="506"/>
    </location>
</feature>
<feature type="topological domain" description="Extracellular" evidence="1">
    <location>
        <begin position="1"/>
        <end position="49"/>
    </location>
</feature>
<feature type="transmembrane region" description="Helical" evidence="1">
    <location>
        <begin position="50"/>
        <end position="70"/>
    </location>
</feature>
<feature type="topological domain" description="Cytoplasmic" evidence="1">
    <location>
        <begin position="71"/>
        <end position="82"/>
    </location>
</feature>
<feature type="transmembrane region" description="Helical" evidence="1">
    <location>
        <begin position="83"/>
        <end position="103"/>
    </location>
</feature>
<feature type="topological domain" description="Extracellular" evidence="1">
    <location>
        <begin position="104"/>
        <end position="111"/>
    </location>
</feature>
<feature type="transmembrane region" description="Helical" evidence="1">
    <location>
        <begin position="112"/>
        <end position="132"/>
    </location>
</feature>
<feature type="topological domain" description="Cytoplasmic" evidence="1">
    <location>
        <begin position="133"/>
        <end position="134"/>
    </location>
</feature>
<feature type="transmembrane region" description="Helical" evidence="1">
    <location>
        <begin position="135"/>
        <end position="155"/>
    </location>
</feature>
<feature type="topological domain" description="Extracellular" evidence="1">
    <location>
        <begin position="156"/>
        <end position="168"/>
    </location>
</feature>
<feature type="transmembrane region" description="Helical" evidence="1">
    <location>
        <begin position="169"/>
        <end position="189"/>
    </location>
</feature>
<feature type="topological domain" description="Cytoplasmic" evidence="1">
    <location>
        <begin position="190"/>
        <end position="196"/>
    </location>
</feature>
<feature type="transmembrane region" description="Helical" evidence="1">
    <location>
        <begin position="197"/>
        <end position="217"/>
    </location>
</feature>
<feature type="topological domain" description="Extracellular" evidence="1">
    <location>
        <begin position="218"/>
        <end position="255"/>
    </location>
</feature>
<feature type="transmembrane region" description="Helical" evidence="1">
    <location>
        <begin position="256"/>
        <end position="276"/>
    </location>
</feature>
<feature type="topological domain" description="Cytoplasmic" evidence="1">
    <location>
        <begin position="277"/>
        <end position="281"/>
    </location>
</feature>
<feature type="transmembrane region" description="Helical" evidence="1">
    <location>
        <begin position="282"/>
        <end position="302"/>
    </location>
</feature>
<feature type="topological domain" description="Extracellular" evidence="1">
    <location>
        <begin position="303"/>
        <end position="319"/>
    </location>
</feature>
<feature type="transmembrane region" description="Helical" evidence="1">
    <location>
        <begin position="320"/>
        <end position="340"/>
    </location>
</feature>
<feature type="topological domain" description="Cytoplasmic" evidence="1">
    <location>
        <position position="341"/>
    </location>
</feature>
<feature type="transmembrane region" description="Helical" evidence="1">
    <location>
        <begin position="342"/>
        <end position="362"/>
    </location>
</feature>
<feature type="topological domain" description="Extracellular" evidence="1">
    <location>
        <begin position="363"/>
        <end position="387"/>
    </location>
</feature>
<feature type="transmembrane region" description="Helical" evidence="1">
    <location>
        <begin position="388"/>
        <end position="408"/>
    </location>
</feature>
<feature type="topological domain" description="Cytoplasmic" evidence="1">
    <location>
        <begin position="409"/>
        <end position="428"/>
    </location>
</feature>
<feature type="transmembrane region" description="Helical" evidence="1">
    <location>
        <begin position="429"/>
        <end position="449"/>
    </location>
</feature>
<feature type="topological domain" description="Extracellular" evidence="1">
    <location>
        <begin position="450"/>
        <end position="506"/>
    </location>
</feature>
<feature type="region of interest" description="Disordered" evidence="2">
    <location>
        <begin position="1"/>
        <end position="25"/>
    </location>
</feature>
<feature type="region of interest" description="Disordered" evidence="2">
    <location>
        <begin position="457"/>
        <end position="481"/>
    </location>
</feature>
<feature type="compositionally biased region" description="Polar residues" evidence="2">
    <location>
        <begin position="459"/>
        <end position="474"/>
    </location>
</feature>
<feature type="glycosylation site" description="N-linked (GlcNAc...) asparagine" evidence="1">
    <location>
        <position position="463"/>
    </location>
</feature>
<feature type="splice variant" id="VSP_056692" description="In isoform 2." evidence="4">
    <location>
        <begin position="1"/>
        <end position="65"/>
    </location>
</feature>
<feature type="splice variant" id="VSP_056693" description="In isoform 2." evidence="4">
    <original>MMWAAGTVAAMSSITFPAISALVSRNAESDQQG</original>
    <variation>SCPGDHNWNKRTMQWPGASTVWLHILHVPCGTD</variation>
    <location>
        <begin position="344"/>
        <end position="376"/>
    </location>
</feature>
<feature type="splice variant" id="VSP_056694" description="In isoform 2." evidence="4">
    <location>
        <begin position="377"/>
        <end position="506"/>
    </location>
</feature>
<feature type="sequence variant" id="VAR_055401" description="In dbSNP:rs17851857." evidence="3">
    <original>V</original>
    <variation>L</variation>
    <location>
        <position position="406"/>
    </location>
</feature>
<feature type="sequence conflict" description="In Ref. 4; BAB55274." evidence="5" ref="4">
    <original>S</original>
    <variation>T</variation>
    <location>
        <position position="367"/>
    </location>
</feature>
<gene>
    <name evidence="6" type="primary">MFSD14B</name>
    <name evidence="6" type="synonym">HIATL1</name>
</gene>
<proteinExistence type="evidence at protein level"/>
<protein>
    <recommendedName>
        <fullName evidence="6">Hippocampus abundant transcript-like protein 1</fullName>
    </recommendedName>
    <alternativeName>
        <fullName evidence="6">Major facilitator superfamily domain-containing 14B</fullName>
    </alternativeName>
</protein>
<reference key="1">
    <citation type="journal article" date="2004" name="Nat. Genet.">
        <title>Complete sequencing and characterization of 21,243 full-length human cDNAs.</title>
        <authorList>
            <person name="Ota T."/>
            <person name="Suzuki Y."/>
            <person name="Nishikawa T."/>
            <person name="Otsuki T."/>
            <person name="Sugiyama T."/>
            <person name="Irie R."/>
            <person name="Wakamatsu A."/>
            <person name="Hayashi K."/>
            <person name="Sato H."/>
            <person name="Nagai K."/>
            <person name="Kimura K."/>
            <person name="Makita H."/>
            <person name="Sekine M."/>
            <person name="Obayashi M."/>
            <person name="Nishi T."/>
            <person name="Shibahara T."/>
            <person name="Tanaka T."/>
            <person name="Ishii S."/>
            <person name="Yamamoto J."/>
            <person name="Saito K."/>
            <person name="Kawai Y."/>
            <person name="Isono Y."/>
            <person name="Nakamura Y."/>
            <person name="Nagahari K."/>
            <person name="Murakami K."/>
            <person name="Yasuda T."/>
            <person name="Iwayanagi T."/>
            <person name="Wagatsuma M."/>
            <person name="Shiratori A."/>
            <person name="Sudo H."/>
            <person name="Hosoiri T."/>
            <person name="Kaku Y."/>
            <person name="Kodaira H."/>
            <person name="Kondo H."/>
            <person name="Sugawara M."/>
            <person name="Takahashi M."/>
            <person name="Kanda K."/>
            <person name="Yokoi T."/>
            <person name="Furuya T."/>
            <person name="Kikkawa E."/>
            <person name="Omura Y."/>
            <person name="Abe K."/>
            <person name="Kamihara K."/>
            <person name="Katsuta N."/>
            <person name="Sato K."/>
            <person name="Tanikawa M."/>
            <person name="Yamazaki M."/>
            <person name="Ninomiya K."/>
            <person name="Ishibashi T."/>
            <person name="Yamashita H."/>
            <person name="Murakawa K."/>
            <person name="Fujimori K."/>
            <person name="Tanai H."/>
            <person name="Kimata M."/>
            <person name="Watanabe M."/>
            <person name="Hiraoka S."/>
            <person name="Chiba Y."/>
            <person name="Ishida S."/>
            <person name="Ono Y."/>
            <person name="Takiguchi S."/>
            <person name="Watanabe S."/>
            <person name="Yosida M."/>
            <person name="Hotuta T."/>
            <person name="Kusano J."/>
            <person name="Kanehori K."/>
            <person name="Takahashi-Fujii A."/>
            <person name="Hara H."/>
            <person name="Tanase T.-O."/>
            <person name="Nomura Y."/>
            <person name="Togiya S."/>
            <person name="Komai F."/>
            <person name="Hara R."/>
            <person name="Takeuchi K."/>
            <person name="Arita M."/>
            <person name="Imose N."/>
            <person name="Musashino K."/>
            <person name="Yuuki H."/>
            <person name="Oshima A."/>
            <person name="Sasaki N."/>
            <person name="Aotsuka S."/>
            <person name="Yoshikawa Y."/>
            <person name="Matsunawa H."/>
            <person name="Ichihara T."/>
            <person name="Shiohata N."/>
            <person name="Sano S."/>
            <person name="Moriya S."/>
            <person name="Momiyama H."/>
            <person name="Satoh N."/>
            <person name="Takami S."/>
            <person name="Terashima Y."/>
            <person name="Suzuki O."/>
            <person name="Nakagawa S."/>
            <person name="Senoh A."/>
            <person name="Mizoguchi H."/>
            <person name="Goto Y."/>
            <person name="Shimizu F."/>
            <person name="Wakebe H."/>
            <person name="Hishigaki H."/>
            <person name="Watanabe T."/>
            <person name="Sugiyama A."/>
            <person name="Takemoto M."/>
            <person name="Kawakami B."/>
            <person name="Yamazaki M."/>
            <person name="Watanabe K."/>
            <person name="Kumagai A."/>
            <person name="Itakura S."/>
            <person name="Fukuzumi Y."/>
            <person name="Fujimori Y."/>
            <person name="Komiyama M."/>
            <person name="Tashiro H."/>
            <person name="Tanigami A."/>
            <person name="Fujiwara T."/>
            <person name="Ono T."/>
            <person name="Yamada K."/>
            <person name="Fujii Y."/>
            <person name="Ozaki K."/>
            <person name="Hirao M."/>
            <person name="Ohmori Y."/>
            <person name="Kawabata A."/>
            <person name="Hikiji T."/>
            <person name="Kobatake N."/>
            <person name="Inagaki H."/>
            <person name="Ikema Y."/>
            <person name="Okamoto S."/>
            <person name="Okitani R."/>
            <person name="Kawakami T."/>
            <person name="Noguchi S."/>
            <person name="Itoh T."/>
            <person name="Shigeta K."/>
            <person name="Senba T."/>
            <person name="Matsumura K."/>
            <person name="Nakajima Y."/>
            <person name="Mizuno T."/>
            <person name="Morinaga M."/>
            <person name="Sasaki M."/>
            <person name="Togashi T."/>
            <person name="Oyama M."/>
            <person name="Hata H."/>
            <person name="Watanabe M."/>
            <person name="Komatsu T."/>
            <person name="Mizushima-Sugano J."/>
            <person name="Satoh T."/>
            <person name="Shirai Y."/>
            <person name="Takahashi Y."/>
            <person name="Nakagawa K."/>
            <person name="Okumura K."/>
            <person name="Nagase T."/>
            <person name="Nomura N."/>
            <person name="Kikuchi H."/>
            <person name="Masuho Y."/>
            <person name="Yamashita R."/>
            <person name="Nakai K."/>
            <person name="Yada T."/>
            <person name="Nakamura Y."/>
            <person name="Ohara O."/>
            <person name="Isogai T."/>
            <person name="Sugano S."/>
        </authorList>
    </citation>
    <scope>NUCLEOTIDE SEQUENCE [LARGE SCALE MRNA] (ISOFORM 2)</scope>
    <scope>NUCLEOTIDE SEQUENCE [LARGE SCALE MRNA] OF 143-506 (ISOFORM 1)</scope>
</reference>
<reference key="2">
    <citation type="journal article" date="2004" name="Nature">
        <title>DNA sequence and analysis of human chromosome 9.</title>
        <authorList>
            <person name="Humphray S.J."/>
            <person name="Oliver K."/>
            <person name="Hunt A.R."/>
            <person name="Plumb R.W."/>
            <person name="Loveland J.E."/>
            <person name="Howe K.L."/>
            <person name="Andrews T.D."/>
            <person name="Searle S."/>
            <person name="Hunt S.E."/>
            <person name="Scott C.E."/>
            <person name="Jones M.C."/>
            <person name="Ainscough R."/>
            <person name="Almeida J.P."/>
            <person name="Ambrose K.D."/>
            <person name="Ashwell R.I.S."/>
            <person name="Babbage A.K."/>
            <person name="Babbage S."/>
            <person name="Bagguley C.L."/>
            <person name="Bailey J."/>
            <person name="Banerjee R."/>
            <person name="Barker D.J."/>
            <person name="Barlow K.F."/>
            <person name="Bates K."/>
            <person name="Beasley H."/>
            <person name="Beasley O."/>
            <person name="Bird C.P."/>
            <person name="Bray-Allen S."/>
            <person name="Brown A.J."/>
            <person name="Brown J.Y."/>
            <person name="Burford D."/>
            <person name="Burrill W."/>
            <person name="Burton J."/>
            <person name="Carder C."/>
            <person name="Carter N.P."/>
            <person name="Chapman J.C."/>
            <person name="Chen Y."/>
            <person name="Clarke G."/>
            <person name="Clark S.Y."/>
            <person name="Clee C.M."/>
            <person name="Clegg S."/>
            <person name="Collier R.E."/>
            <person name="Corby N."/>
            <person name="Crosier M."/>
            <person name="Cummings A.T."/>
            <person name="Davies J."/>
            <person name="Dhami P."/>
            <person name="Dunn M."/>
            <person name="Dutta I."/>
            <person name="Dyer L.W."/>
            <person name="Earthrowl M.E."/>
            <person name="Faulkner L."/>
            <person name="Fleming C.J."/>
            <person name="Frankish A."/>
            <person name="Frankland J.A."/>
            <person name="French L."/>
            <person name="Fricker D.G."/>
            <person name="Garner P."/>
            <person name="Garnett J."/>
            <person name="Ghori J."/>
            <person name="Gilbert J.G.R."/>
            <person name="Glison C."/>
            <person name="Grafham D.V."/>
            <person name="Gribble S."/>
            <person name="Griffiths C."/>
            <person name="Griffiths-Jones S."/>
            <person name="Grocock R."/>
            <person name="Guy J."/>
            <person name="Hall R.E."/>
            <person name="Hammond S."/>
            <person name="Harley J.L."/>
            <person name="Harrison E.S.I."/>
            <person name="Hart E.A."/>
            <person name="Heath P.D."/>
            <person name="Henderson C.D."/>
            <person name="Hopkins B.L."/>
            <person name="Howard P.J."/>
            <person name="Howden P.J."/>
            <person name="Huckle E."/>
            <person name="Johnson C."/>
            <person name="Johnson D."/>
            <person name="Joy A.A."/>
            <person name="Kay M."/>
            <person name="Keenan S."/>
            <person name="Kershaw J.K."/>
            <person name="Kimberley A.M."/>
            <person name="King A."/>
            <person name="Knights A."/>
            <person name="Laird G.K."/>
            <person name="Langford C."/>
            <person name="Lawlor S."/>
            <person name="Leongamornlert D.A."/>
            <person name="Leversha M."/>
            <person name="Lloyd C."/>
            <person name="Lloyd D.M."/>
            <person name="Lovell J."/>
            <person name="Martin S."/>
            <person name="Mashreghi-Mohammadi M."/>
            <person name="Matthews L."/>
            <person name="McLaren S."/>
            <person name="McLay K.E."/>
            <person name="McMurray A."/>
            <person name="Milne S."/>
            <person name="Nickerson T."/>
            <person name="Nisbett J."/>
            <person name="Nordsiek G."/>
            <person name="Pearce A.V."/>
            <person name="Peck A.I."/>
            <person name="Porter K.M."/>
            <person name="Pandian R."/>
            <person name="Pelan S."/>
            <person name="Phillimore B."/>
            <person name="Povey S."/>
            <person name="Ramsey Y."/>
            <person name="Rand V."/>
            <person name="Scharfe M."/>
            <person name="Sehra H.K."/>
            <person name="Shownkeen R."/>
            <person name="Sims S.K."/>
            <person name="Skuce C.D."/>
            <person name="Smith M."/>
            <person name="Steward C.A."/>
            <person name="Swarbreck D."/>
            <person name="Sycamore N."/>
            <person name="Tester J."/>
            <person name="Thorpe A."/>
            <person name="Tracey A."/>
            <person name="Tromans A."/>
            <person name="Thomas D.W."/>
            <person name="Wall M."/>
            <person name="Wallis J.M."/>
            <person name="West A.P."/>
            <person name="Whitehead S.L."/>
            <person name="Willey D.L."/>
            <person name="Williams S.A."/>
            <person name="Wilming L."/>
            <person name="Wray P.W."/>
            <person name="Young L."/>
            <person name="Ashurst J.L."/>
            <person name="Coulson A."/>
            <person name="Blocker H."/>
            <person name="Durbin R.M."/>
            <person name="Sulston J.E."/>
            <person name="Hubbard T."/>
            <person name="Jackson M.J."/>
            <person name="Bentley D.R."/>
            <person name="Beck S."/>
            <person name="Rogers J."/>
            <person name="Dunham I."/>
        </authorList>
    </citation>
    <scope>NUCLEOTIDE SEQUENCE [LARGE SCALE GENOMIC DNA]</scope>
</reference>
<reference key="3">
    <citation type="journal article" date="2004" name="Genome Res.">
        <title>The status, quality, and expansion of the NIH full-length cDNA project: the Mammalian Gene Collection (MGC).</title>
        <authorList>
            <consortium name="The MGC Project Team"/>
        </authorList>
    </citation>
    <scope>NUCLEOTIDE SEQUENCE [LARGE SCALE MRNA] (ISOFORM 1)</scope>
    <scope>VARIANT LEU-406</scope>
    <source>
        <tissue>Skin</tissue>
    </source>
</reference>
<reference key="4">
    <citation type="submission" date="2005-04" db="EMBL/GenBank/DDBJ databases">
        <authorList>
            <person name="Suzuki Y."/>
            <person name="Sugano S."/>
            <person name="Totoki Y."/>
            <person name="Toyoda A."/>
            <person name="Takeda T."/>
            <person name="Sakaki Y."/>
            <person name="Tanaka A."/>
            <person name="Yokoyama S."/>
        </authorList>
    </citation>
    <scope>NUCLEOTIDE SEQUENCE [LARGE SCALE MRNA] OF 140-506 (ISOFORM 1)</scope>
    <source>
        <tissue>Liver</tissue>
    </source>
</reference>
<dbReference type="EMBL" id="AK027659">
    <property type="protein sequence ID" value="BAB55274.1"/>
    <property type="status" value="ALT_INIT"/>
    <property type="molecule type" value="mRNA"/>
</dbReference>
<dbReference type="EMBL" id="AK300615">
    <property type="protein sequence ID" value="BAG62308.1"/>
    <property type="molecule type" value="mRNA"/>
</dbReference>
<dbReference type="EMBL" id="AL358232">
    <property type="status" value="NOT_ANNOTATED_CDS"/>
    <property type="molecule type" value="Genomic_DNA"/>
</dbReference>
<dbReference type="EMBL" id="AL691447">
    <property type="status" value="NOT_ANNOTATED_CDS"/>
    <property type="molecule type" value="Genomic_DNA"/>
</dbReference>
<dbReference type="EMBL" id="BC106062">
    <property type="protein sequence ID" value="AAI06063.1"/>
    <property type="status" value="ALT_INIT"/>
    <property type="molecule type" value="mRNA"/>
</dbReference>
<dbReference type="EMBL" id="BC021093">
    <property type="protein sequence ID" value="AAH21093.2"/>
    <property type="molecule type" value="mRNA"/>
</dbReference>
<dbReference type="EMBL" id="AK222836">
    <property type="protein sequence ID" value="BAD96556.1"/>
    <property type="status" value="ALT_INIT"/>
    <property type="molecule type" value="mRNA"/>
</dbReference>
<dbReference type="CCDS" id="CCDS6710.2">
    <molecule id="Q5SR56-1"/>
</dbReference>
<dbReference type="RefSeq" id="NP_115947.2">
    <molecule id="Q5SR56-1"/>
    <property type="nucleotide sequence ID" value="NM_032558.3"/>
</dbReference>
<dbReference type="RefSeq" id="XP_016870710.1">
    <property type="nucleotide sequence ID" value="XM_017015221.1"/>
</dbReference>
<dbReference type="SMR" id="Q5SR56"/>
<dbReference type="BioGRID" id="124166">
    <property type="interactions" value="78"/>
</dbReference>
<dbReference type="FunCoup" id="Q5SR56">
    <property type="interactions" value="1163"/>
</dbReference>
<dbReference type="IntAct" id="Q5SR56">
    <property type="interactions" value="75"/>
</dbReference>
<dbReference type="STRING" id="9606.ENSP00000364493"/>
<dbReference type="TCDB" id="2.A.1.2.30">
    <property type="family name" value="the major facilitator superfamily (mfs)"/>
</dbReference>
<dbReference type="GlyCosmos" id="Q5SR56">
    <property type="glycosylation" value="1 site, No reported glycans"/>
</dbReference>
<dbReference type="GlyGen" id="Q5SR56">
    <property type="glycosylation" value="1 site"/>
</dbReference>
<dbReference type="iPTMnet" id="Q5SR56"/>
<dbReference type="PhosphoSitePlus" id="Q5SR56"/>
<dbReference type="BioMuta" id="MFSD14B"/>
<dbReference type="DMDM" id="238054382"/>
<dbReference type="jPOST" id="Q5SR56"/>
<dbReference type="MassIVE" id="Q5SR56"/>
<dbReference type="PaxDb" id="9606-ENSP00000364493"/>
<dbReference type="PeptideAtlas" id="Q5SR56"/>
<dbReference type="ProteomicsDB" id="5181"/>
<dbReference type="ProteomicsDB" id="63839">
    <molecule id="Q5SR56-1"/>
</dbReference>
<dbReference type="Antibodypedia" id="3023">
    <property type="antibodies" value="51 antibodies from 16 providers"/>
</dbReference>
<dbReference type="DNASU" id="84641"/>
<dbReference type="Ensembl" id="ENST00000375344.8">
    <molecule id="Q5SR56-1"/>
    <property type="protein sequence ID" value="ENSP00000364493.3"/>
    <property type="gene ID" value="ENSG00000148110.17"/>
</dbReference>
<dbReference type="GeneID" id="84641"/>
<dbReference type="KEGG" id="hsa:84641"/>
<dbReference type="MANE-Select" id="ENST00000375344.8">
    <property type="protein sequence ID" value="ENSP00000364493.3"/>
    <property type="RefSeq nucleotide sequence ID" value="NM_032558.3"/>
    <property type="RefSeq protein sequence ID" value="NP_115947.2"/>
</dbReference>
<dbReference type="UCSC" id="uc004aur.4">
    <molecule id="Q5SR56-1"/>
    <property type="organism name" value="human"/>
</dbReference>
<dbReference type="AGR" id="HGNC:23376"/>
<dbReference type="CTD" id="84641"/>
<dbReference type="DisGeNET" id="84641"/>
<dbReference type="GeneCards" id="MFSD14B"/>
<dbReference type="HGNC" id="HGNC:23376">
    <property type="gene designation" value="MFSD14B"/>
</dbReference>
<dbReference type="HPA" id="ENSG00000148110">
    <property type="expression patterns" value="Low tissue specificity"/>
</dbReference>
<dbReference type="MIM" id="620348">
    <property type="type" value="gene"/>
</dbReference>
<dbReference type="neXtProt" id="NX_Q5SR56"/>
<dbReference type="OpenTargets" id="ENSG00000148110"/>
<dbReference type="PharmGKB" id="PA142671691"/>
<dbReference type="VEuPathDB" id="HostDB:ENSG00000148110"/>
<dbReference type="eggNOG" id="KOG2816">
    <property type="taxonomic scope" value="Eukaryota"/>
</dbReference>
<dbReference type="GeneTree" id="ENSGT00940000156081"/>
<dbReference type="HOGENOM" id="CLU_001265_10_5_1"/>
<dbReference type="InParanoid" id="Q5SR56"/>
<dbReference type="OMA" id="LELMWYG"/>
<dbReference type="OrthoDB" id="419616at2759"/>
<dbReference type="PAN-GO" id="Q5SR56">
    <property type="GO annotations" value="0 GO annotations based on evolutionary models"/>
</dbReference>
<dbReference type="PhylomeDB" id="Q5SR56"/>
<dbReference type="TreeFam" id="TF313511"/>
<dbReference type="PathwayCommons" id="Q5SR56"/>
<dbReference type="SignaLink" id="Q5SR56"/>
<dbReference type="BioGRID-ORCS" id="84641">
    <property type="hits" value="7 hits in 1129 CRISPR screens"/>
</dbReference>
<dbReference type="ChiTaRS" id="MFSD14B">
    <property type="organism name" value="human"/>
</dbReference>
<dbReference type="GenomeRNAi" id="84641"/>
<dbReference type="Pharos" id="Q5SR56">
    <property type="development level" value="Tdark"/>
</dbReference>
<dbReference type="PRO" id="PR:Q5SR56"/>
<dbReference type="Proteomes" id="UP000005640">
    <property type="component" value="Chromosome 9"/>
</dbReference>
<dbReference type="RNAct" id="Q5SR56">
    <property type="molecule type" value="protein"/>
</dbReference>
<dbReference type="Bgee" id="ENSG00000148110">
    <property type="expression patterns" value="Expressed in oviduct epithelium and 184 other cell types or tissues"/>
</dbReference>
<dbReference type="ExpressionAtlas" id="Q5SR56">
    <property type="expression patterns" value="baseline and differential"/>
</dbReference>
<dbReference type="GO" id="GO:0016020">
    <property type="term" value="C:membrane"/>
    <property type="evidence" value="ECO:0007669"/>
    <property type="project" value="UniProtKB-SubCell"/>
</dbReference>
<dbReference type="GO" id="GO:0022857">
    <property type="term" value="F:transmembrane transporter activity"/>
    <property type="evidence" value="ECO:0007669"/>
    <property type="project" value="InterPro"/>
</dbReference>
<dbReference type="CDD" id="cd17387">
    <property type="entry name" value="MFS_MFSD14"/>
    <property type="match status" value="1"/>
</dbReference>
<dbReference type="Gene3D" id="1.20.1250.20">
    <property type="entry name" value="MFS general substrate transporter like domains"/>
    <property type="match status" value="1"/>
</dbReference>
<dbReference type="InterPro" id="IPR011701">
    <property type="entry name" value="MFS"/>
</dbReference>
<dbReference type="InterPro" id="IPR020846">
    <property type="entry name" value="MFS_dom"/>
</dbReference>
<dbReference type="InterPro" id="IPR036259">
    <property type="entry name" value="MFS_trans_sf"/>
</dbReference>
<dbReference type="InterPro" id="IPR005829">
    <property type="entry name" value="Sugar_transporter_CS"/>
</dbReference>
<dbReference type="InterPro" id="IPR001958">
    <property type="entry name" value="Tet-R_TetA/multi-R_MdtG-like"/>
</dbReference>
<dbReference type="PANTHER" id="PTHR23504:SF32">
    <property type="entry name" value="HIPPOCAMPUS ABUNDANT TRANSCRIPT-LIKE PROTEIN 1"/>
    <property type="match status" value="1"/>
</dbReference>
<dbReference type="PANTHER" id="PTHR23504">
    <property type="entry name" value="MAJOR FACILITATOR SUPERFAMILY DOMAIN-CONTAINING PROTEIN 10"/>
    <property type="match status" value="1"/>
</dbReference>
<dbReference type="Pfam" id="PF07690">
    <property type="entry name" value="MFS_1"/>
    <property type="match status" value="1"/>
</dbReference>
<dbReference type="PRINTS" id="PR01035">
    <property type="entry name" value="TCRTETA"/>
</dbReference>
<dbReference type="SUPFAM" id="SSF103473">
    <property type="entry name" value="MFS general substrate transporter"/>
    <property type="match status" value="1"/>
</dbReference>
<dbReference type="PROSITE" id="PS50850">
    <property type="entry name" value="MFS"/>
    <property type="match status" value="1"/>
</dbReference>
<dbReference type="PROSITE" id="PS00216">
    <property type="entry name" value="SUGAR_TRANSPORT_1"/>
    <property type="match status" value="1"/>
</dbReference>
<keyword id="KW-0025">Alternative splicing</keyword>
<keyword id="KW-0325">Glycoprotein</keyword>
<keyword id="KW-0472">Membrane</keyword>
<keyword id="KW-1267">Proteomics identification</keyword>
<keyword id="KW-1185">Reference proteome</keyword>
<keyword id="KW-0812">Transmembrane</keyword>
<keyword id="KW-1133">Transmembrane helix</keyword>
<keyword id="KW-0813">Transport</keyword>
<name>MF14B_HUMAN</name>
<sequence length="506" mass="54545">MSVEPPPELEEKAASEPEAGAMPEKRAGAQAAGSTWLQGFGRPSVYHAAIVIFLEFFAWGLLTTPMLTVLHETFSQHTFLMNGLIQGVKGLLSFLSAPLIGALSDVWGRKPFLLGTVFFTCFPIPLMRISPWWYFAMISVSGVFSVTFSVIFAYVADVTQEHERSTAYGWVSATFAASLVSSPAIGAYLSASYGDSLVVLVATVVALLDICFILVAVPESLPEKMRPVSWGAQISWKQADPFASLKKVGKDSTVLLICITVFLSYLPEAGQYSSFFLYLRQVIGFGSVKIAAFIAMVGILSIVAQTAFLSILMRSLGNKNTVLLGLGFQMLQLAWYGFGSQAWMMWAAGTVAAMSSITFPAISALVSRNAESDQQGVAQGIITGIRGLCNGLGPALYGFIFYMFHVELTELGPKLNSNNVPLQGAVIPGPPFLFGACIVLMSFLVALFIPEYSKASGVQKHSNSSSGSLTNTPERGSDEDIEPLLQDSSIWELSSFEEPGNQCTEL</sequence>
<evidence type="ECO:0000255" key="1"/>
<evidence type="ECO:0000256" key="2">
    <source>
        <dbReference type="SAM" id="MobiDB-lite"/>
    </source>
</evidence>
<evidence type="ECO:0000269" key="3">
    <source>
    </source>
</evidence>
<evidence type="ECO:0000303" key="4">
    <source>
    </source>
</evidence>
<evidence type="ECO:0000305" key="5"/>
<evidence type="ECO:0000312" key="6">
    <source>
        <dbReference type="HGNC" id="HGNC:23376"/>
    </source>
</evidence>
<organism>
    <name type="scientific">Homo sapiens</name>
    <name type="common">Human</name>
    <dbReference type="NCBI Taxonomy" id="9606"/>
    <lineage>
        <taxon>Eukaryota</taxon>
        <taxon>Metazoa</taxon>
        <taxon>Chordata</taxon>
        <taxon>Craniata</taxon>
        <taxon>Vertebrata</taxon>
        <taxon>Euteleostomi</taxon>
        <taxon>Mammalia</taxon>
        <taxon>Eutheria</taxon>
        <taxon>Euarchontoglires</taxon>
        <taxon>Primates</taxon>
        <taxon>Haplorrhini</taxon>
        <taxon>Catarrhini</taxon>
        <taxon>Hominidae</taxon>
        <taxon>Homo</taxon>
    </lineage>
</organism>
<comment type="interaction">
    <interactant intactId="EBI-373355">
        <id>Q5SR56</id>
    </interactant>
    <interactant intactId="EBI-10827839">
        <id>Q15848</id>
        <label>ADIPOQ</label>
    </interactant>
    <organismsDiffer>false</organismsDiffer>
    <experiments>3</experiments>
</comment>
<comment type="interaction">
    <interactant intactId="EBI-373355">
        <id>Q5SR56</id>
    </interactant>
    <interactant intactId="EBI-2803601">
        <id>Q9NRZ7</id>
        <label>AGPAT3</label>
    </interactant>
    <organismsDiffer>false</organismsDiffer>
    <experiments>3</experiments>
</comment>
<comment type="interaction">
    <interactant intactId="EBI-373355">
        <id>Q5SR56</id>
    </interactant>
    <interactant intactId="EBI-1754287">
        <id>Q9NRZ5</id>
        <label>AGPAT4</label>
    </interactant>
    <organismsDiffer>false</organismsDiffer>
    <experiments>3</experiments>
</comment>
<comment type="interaction">
    <interactant intactId="EBI-373355">
        <id>Q5SR56</id>
    </interactant>
    <interactant intactId="EBI-714543">
        <id>Q15041</id>
        <label>ARL6IP1</label>
    </interactant>
    <organismsDiffer>false</organismsDiffer>
    <experiments>3</experiments>
</comment>
<comment type="interaction">
    <interactant intactId="EBI-373355">
        <id>Q5SR56</id>
    </interactant>
    <interactant intactId="EBI-12069500">
        <id>Q9HD20-3</id>
        <label>ATP13A1</label>
    </interactant>
    <organismsDiffer>false</organismsDiffer>
    <experiments>3</experiments>
</comment>
<comment type="interaction">
    <interactant intactId="EBI-373355">
        <id>Q5SR56</id>
    </interactant>
    <interactant intactId="EBI-749464">
        <id>Q12983</id>
        <label>BNIP3</label>
    </interactant>
    <organismsDiffer>false</organismsDiffer>
    <experiments>3</experiments>
</comment>
<comment type="interaction">
    <interactant intactId="EBI-373355">
        <id>Q5SR56</id>
    </interactant>
    <interactant intactId="EBI-12003442">
        <id>Q8WVX3-2</id>
        <label>C4orf3</label>
    </interactant>
    <organismsDiffer>false</organismsDiffer>
    <experiments>3</experiments>
</comment>
<comment type="interaction">
    <interactant intactId="EBI-373355">
        <id>Q5SR56</id>
    </interactant>
    <interactant intactId="EBI-10271156">
        <id>Q8NHW4</id>
        <label>CCL4L2</label>
    </interactant>
    <organismsDiffer>false</organismsDiffer>
    <experiments>3</experiments>
</comment>
<comment type="interaction">
    <interactant intactId="EBI-373355">
        <id>Q5SR56</id>
    </interactant>
    <interactant intactId="EBI-11579371">
        <id>Q9BXR6</id>
        <label>CFHR5</label>
    </interactant>
    <organismsDiffer>false</organismsDiffer>
    <experiments>3</experiments>
</comment>
<comment type="interaction">
    <interactant intactId="EBI-373355">
        <id>Q5SR56</id>
    </interactant>
    <interactant intactId="EBI-9316372">
        <id>O14493</id>
        <label>CLDN4</label>
    </interactant>
    <organismsDiffer>false</organismsDiffer>
    <experiments>3</experiments>
</comment>
<comment type="interaction">
    <interactant intactId="EBI-373355">
        <id>Q5SR56</id>
    </interactant>
    <interactant intactId="EBI-7247651">
        <id>Q96MX0</id>
        <label>CMTM3</label>
    </interactant>
    <organismsDiffer>false</organismsDiffer>
    <experiments>3</experiments>
</comment>
<comment type="interaction">
    <interactant intactId="EBI-373355">
        <id>Q5SR56</id>
    </interactant>
    <interactant intactId="EBI-372265">
        <id>P21964</id>
        <label>COMT</label>
    </interactant>
    <organismsDiffer>false</organismsDiffer>
    <experiments>3</experiments>
</comment>
<comment type="interaction">
    <interactant intactId="EBI-373355">
        <id>Q5SR56</id>
    </interactant>
    <interactant intactId="EBI-10267100">
        <id>Q8N6G5</id>
        <label>CSGALNACT2</label>
    </interactant>
    <organismsDiffer>false</organismsDiffer>
    <experiments>3</experiments>
</comment>
<comment type="interaction">
    <interactant intactId="EBI-373355">
        <id>Q5SR56</id>
    </interactant>
    <interactant intactId="EBI-1058710">
        <id>O43169</id>
        <label>CYB5B</label>
    </interactant>
    <organismsDiffer>false</organismsDiffer>
    <experiments>3</experiments>
</comment>
<comment type="interaction">
    <interactant intactId="EBI-373355">
        <id>Q5SR56</id>
    </interactant>
    <interactant intactId="EBI-2680384">
        <id>Q9BQA9</id>
        <label>CYBC1</label>
    </interactant>
    <organismsDiffer>false</organismsDiffer>
    <experiments>3</experiments>
</comment>
<comment type="interaction">
    <interactant intactId="EBI-373355">
        <id>Q5SR56</id>
    </interactant>
    <interactant intactId="EBI-10305240">
        <id>Q9H1M4</id>
        <label>DEFB127</label>
    </interactant>
    <organismsDiffer>false</organismsDiffer>
    <experiments>3</experiments>
</comment>
<comment type="interaction">
    <interactant intactId="EBI-373355">
        <id>Q5SR56</id>
    </interactant>
    <interactant intactId="EBI-8639143">
        <id>Q96LL9</id>
        <label>DNAJC30</label>
    </interactant>
    <organismsDiffer>false</organismsDiffer>
    <experiments>3</experiments>
</comment>
<comment type="interaction">
    <interactant intactId="EBI-373355">
        <id>Q5SR56</id>
    </interactant>
    <interactant intactId="EBI-2820492">
        <id>Q9BV81</id>
        <label>EMC6</label>
    </interactant>
    <organismsDiffer>false</organismsDiffer>
    <experiments>3</experiments>
</comment>
<comment type="interaction">
    <interactant intactId="EBI-373355">
        <id>Q5SR56</id>
    </interactant>
    <interactant intactId="EBI-711490">
        <id>Q9UKR5</id>
        <label>ERG28</label>
    </interactant>
    <organismsDiffer>false</organismsDiffer>
    <experiments>3</experiments>
</comment>
<comment type="interaction">
    <interactant intactId="EBI-373355">
        <id>Q5SR56</id>
    </interactant>
    <interactant intactId="EBI-724839">
        <id>Q14318</id>
        <label>FKBP8</label>
    </interactant>
    <organismsDiffer>false</organismsDiffer>
    <experiments>3</experiments>
</comment>
<comment type="interaction">
    <interactant intactId="EBI-373355">
        <id>Q5SR56</id>
    </interactant>
    <interactant intactId="EBI-12701460">
        <id>Q01740</id>
        <label>FMO1</label>
    </interactant>
    <organismsDiffer>false</organismsDiffer>
    <experiments>3</experiments>
</comment>
<comment type="interaction">
    <interactant intactId="EBI-373355">
        <id>Q5SR56</id>
    </interactant>
    <interactant intactId="EBI-714482">
        <id>Q9BWH2</id>
        <label>FUNDC2</label>
    </interactant>
    <organismsDiffer>false</organismsDiffer>
    <experiments>3</experiments>
</comment>
<comment type="interaction">
    <interactant intactId="EBI-373355">
        <id>Q5SR56</id>
    </interactant>
    <interactant intactId="EBI-11991950">
        <id>Q8WWP7</id>
        <label>GIMAP1</label>
    </interactant>
    <organismsDiffer>false</organismsDiffer>
    <experiments>3</experiments>
</comment>
<comment type="interaction">
    <interactant intactId="EBI-373355">
        <id>Q5SR56</id>
    </interactant>
    <interactant intactId="EBI-4401517">
        <id>O14653</id>
        <label>GOSR2</label>
    </interactant>
    <organismsDiffer>false</organismsDiffer>
    <experiments>3</experiments>
</comment>
<comment type="interaction">
    <interactant intactId="EBI-373355">
        <id>Q5SR56</id>
    </interactant>
    <interactant intactId="EBI-10232876">
        <id>Q14416</id>
        <label>GRM2</label>
    </interactant>
    <organismsDiffer>false</organismsDiffer>
    <experiments>3</experiments>
</comment>
<comment type="interaction">
    <interactant intactId="EBI-373355">
        <id>Q5SR56</id>
    </interactant>
    <interactant intactId="EBI-12007212">
        <id>Q86UP2-3</id>
        <label>KTN1</label>
    </interactant>
    <organismsDiffer>false</organismsDiffer>
    <experiments>3</experiments>
</comment>
<comment type="interaction">
    <interactant intactId="EBI-373355">
        <id>Q5SR56</id>
    </interactant>
    <interactant intactId="EBI-8070286">
        <id>O43561-2</id>
        <label>LAT</label>
    </interactant>
    <organismsDiffer>false</organismsDiffer>
    <experiments>3</experiments>
</comment>
<comment type="interaction">
    <interactant intactId="EBI-373355">
        <id>Q5SR56</id>
    </interactant>
    <interactant intactId="EBI-750776">
        <id>O95214</id>
        <label>LEPROTL1</label>
    </interactant>
    <organismsDiffer>false</organismsDiffer>
    <experiments>3</experiments>
</comment>
<comment type="interaction">
    <interactant intactId="EBI-373355">
        <id>Q5SR56</id>
    </interactant>
    <interactant intactId="EBI-4280011">
        <id>Q7L5N7</id>
        <label>LPCAT2</label>
    </interactant>
    <organismsDiffer>false</organismsDiffer>
    <experiments>3</experiments>
</comment>
<comment type="interaction">
    <interactant intactId="EBI-373355">
        <id>Q5SR56</id>
    </interactant>
    <interactant intactId="EBI-2830349">
        <id>Q7Z4F1</id>
        <label>LRP10</label>
    </interactant>
    <organismsDiffer>false</organismsDiffer>
    <experiments>3</experiments>
</comment>
<comment type="interaction">
    <interactant intactId="EBI-373355">
        <id>Q5SR56</id>
    </interactant>
    <interactant intactId="EBI-12866138">
        <id>A0A0C4DFN3</id>
        <label>MGLL</label>
    </interactant>
    <organismsDiffer>false</organismsDiffer>
    <experiments>3</experiments>
</comment>
<comment type="interaction">
    <interactant intactId="EBI-373355">
        <id>Q5SR56</id>
    </interactant>
    <interactant intactId="EBI-2808234">
        <id>P11836</id>
        <label>MS4A1</label>
    </interactant>
    <organismsDiffer>false</organismsDiffer>
    <experiments>3</experiments>
</comment>
<comment type="interaction">
    <interactant intactId="EBI-373355">
        <id>Q5SR56</id>
    </interactant>
    <interactant intactId="EBI-2863634">
        <id>Q9UHE5</id>
        <label>NAT8</label>
    </interactant>
    <organismsDiffer>false</organismsDiffer>
    <experiments>3</experiments>
</comment>
<comment type="interaction">
    <interactant intactId="EBI-373355">
        <id>Q5SR56</id>
    </interactant>
    <interactant intactId="EBI-12051377">
        <id>Q8N912</id>
        <label>NRAC</label>
    </interactant>
    <organismsDiffer>false</organismsDiffer>
    <experiments>3</experiments>
</comment>
<comment type="interaction">
    <interactant intactId="EBI-373355">
        <id>Q5SR56</id>
    </interactant>
    <interactant intactId="EBI-1054848">
        <id>Q9P0S3</id>
        <label>ORMDL1</label>
    </interactant>
    <organismsDiffer>false</organismsDiffer>
    <experiments>3</experiments>
</comment>
<comment type="interaction">
    <interactant intactId="EBI-373355">
        <id>Q5SR56</id>
    </interactant>
    <interactant intactId="EBI-981985">
        <id>Q9Y5Y5</id>
        <label>PEX16</label>
    </interactant>
    <organismsDiffer>false</organismsDiffer>
    <experiments>3</experiments>
</comment>
<comment type="interaction">
    <interactant intactId="EBI-373355">
        <id>Q5SR56</id>
    </interactant>
    <interactant intactId="EBI-12257782">
        <id>Q99640-2</id>
        <label>PKMYT1</label>
    </interactant>
    <organismsDiffer>false</organismsDiffer>
    <experiments>3</experiments>
</comment>
<comment type="interaction">
    <interactant intactId="EBI-373355">
        <id>Q5SR56</id>
    </interactant>
    <interactant intactId="EBI-14210385">
        <id>Q59EV6</id>
        <label>PPGB</label>
    </interactant>
    <organismsDiffer>false</organismsDiffer>
    <experiments>3</experiments>
</comment>
<comment type="interaction">
    <interactant intactId="EBI-373355">
        <id>Q5SR56</id>
    </interactant>
    <interactant intactId="EBI-722696">
        <id>Q7Z6L0</id>
        <label>PRRT2</label>
    </interactant>
    <organismsDiffer>false</organismsDiffer>
    <experiments>3</experiments>
</comment>
<comment type="interaction">
    <interactant intactId="EBI-373355">
        <id>Q5SR56</id>
    </interactant>
    <interactant intactId="EBI-13044680">
        <id>Q9Y225-2</id>
        <label>RNF24</label>
    </interactant>
    <organismsDiffer>false</organismsDiffer>
    <experiments>3</experiments>
</comment>
<comment type="interaction">
    <interactant intactId="EBI-373355">
        <id>Q5SR56</id>
    </interactant>
    <interactant intactId="EBI-3917235">
        <id>Q9NTJ5</id>
        <label>SACM1L</label>
    </interactant>
    <organismsDiffer>false</organismsDiffer>
    <experiments>3</experiments>
</comment>
<comment type="interaction">
    <interactant intactId="EBI-373355">
        <id>Q5SR56</id>
    </interactant>
    <interactant intactId="EBI-2684237">
        <id>O00767</id>
        <label>SCD</label>
    </interactant>
    <organismsDiffer>false</organismsDiffer>
    <experiments>3</experiments>
</comment>
<comment type="interaction">
    <interactant intactId="EBI-373355">
        <id>Q5SR56</id>
    </interactant>
    <interactant intactId="EBI-10329948">
        <id>Q9Y6X1</id>
        <label>SERP1</label>
    </interactant>
    <organismsDiffer>false</organismsDiffer>
    <experiments>3</experiments>
</comment>
<comment type="interaction">
    <interactant intactId="EBI-373355">
        <id>Q5SR56</id>
    </interactant>
    <interactant intactId="EBI-749270">
        <id>Q8N6R1</id>
        <label>SERP2</label>
    </interactant>
    <organismsDiffer>false</organismsDiffer>
    <experiments>3</experiments>
</comment>
<comment type="interaction">
    <interactant intactId="EBI-373355">
        <id>Q5SR56</id>
    </interactant>
    <interactant intactId="EBI-10281975">
        <id>Q96AG3</id>
        <label>SLC25A46</label>
    </interactant>
    <organismsDiffer>false</organismsDiffer>
    <experiments>3</experiments>
</comment>
<comment type="interaction">
    <interactant intactId="EBI-373355">
        <id>Q5SR56</id>
    </interactant>
    <interactant intactId="EBI-2823239">
        <id>Q9NUM3</id>
        <label>SLC39A9</label>
    </interactant>
    <organismsDiffer>false</organismsDiffer>
    <experiments>3</experiments>
</comment>
<comment type="interaction">
    <interactant intactId="EBI-373355">
        <id>Q5SR56</id>
    </interactant>
    <interactant intactId="EBI-3907610">
        <id>Q8N2U9</id>
        <label>SLC66A2</label>
    </interactant>
    <organismsDiffer>false</organismsDiffer>
    <experiments>3</experiments>
</comment>
<comment type="interaction">
    <interactant intactId="EBI-373355">
        <id>Q5SR56</id>
    </interactant>
    <interactant intactId="EBI-10226799">
        <id>Q0VAQ4</id>
        <label>SMAGP</label>
    </interactant>
    <organismsDiffer>false</organismsDiffer>
    <experiments>3</experiments>
</comment>
<comment type="interaction">
    <interactant intactId="EBI-373355">
        <id>Q5SR56</id>
    </interactant>
    <interactant intactId="EBI-1394295">
        <id>Q13277</id>
        <label>STX3</label>
    </interactant>
    <organismsDiffer>false</organismsDiffer>
    <experiments>3</experiments>
</comment>
<comment type="interaction">
    <interactant intactId="EBI-373355">
        <id>Q5SR56</id>
    </interactant>
    <interactant intactId="EBI-2877718">
        <id>Q9NZ01</id>
        <label>TECR</label>
    </interactant>
    <organismsDiffer>false</organismsDiffer>
    <experiments>3</experiments>
</comment>
<comment type="interaction">
    <interactant intactId="EBI-373355">
        <id>Q5SR56</id>
    </interactant>
    <interactant intactId="EBI-311394">
        <id>Q9C0I4</id>
        <label>THSD7B</label>
    </interactant>
    <organismsDiffer>false</organismsDiffer>
    <experiments>3</experiments>
</comment>
<comment type="interaction">
    <interactant intactId="EBI-373355">
        <id>Q5SR56</id>
    </interactant>
    <interactant intactId="EBI-6268651">
        <id>Q9NPL8</id>
        <label>TIMMDC1</label>
    </interactant>
    <organismsDiffer>false</organismsDiffer>
    <experiments>3</experiments>
</comment>
<comment type="interaction">
    <interactant intactId="EBI-373355">
        <id>Q5SR56</id>
    </interactant>
    <interactant intactId="EBI-1045825">
        <id>P55061</id>
        <label>TMBIM6</label>
    </interactant>
    <organismsDiffer>false</organismsDiffer>
    <experiments>3</experiments>
</comment>
<comment type="interaction">
    <interactant intactId="EBI-373355">
        <id>Q5SR56</id>
    </interactant>
    <interactant intactId="EBI-17684533">
        <id>Q9NRX6</id>
        <label>TMEM167B</label>
    </interactant>
    <organismsDiffer>false</organismsDiffer>
    <experiments>3</experiments>
</comment>
<comment type="interaction">
    <interactant intactId="EBI-373355">
        <id>Q5SR56</id>
    </interactant>
    <interactant intactId="EBI-2800645">
        <id>Q96HP8</id>
        <label>TMEM176A</label>
    </interactant>
    <organismsDiffer>false</organismsDiffer>
    <experiments>3</experiments>
</comment>
<comment type="interaction">
    <interactant intactId="EBI-373355">
        <id>Q5SR56</id>
    </interactant>
    <interactant intactId="EBI-741829">
        <id>Q96HH6</id>
        <label>TMEM19</label>
    </interactant>
    <organismsDiffer>false</organismsDiffer>
    <experiments>3</experiments>
</comment>
<comment type="interaction">
    <interactant intactId="EBI-373355">
        <id>Q5SR56</id>
    </interactant>
    <interactant intactId="EBI-12876824">
        <id>Q9BTX3</id>
        <label>TMEM208</label>
    </interactant>
    <organismsDiffer>false</organismsDiffer>
    <experiments>3</experiments>
</comment>
<comment type="interaction">
    <interactant intactId="EBI-373355">
        <id>Q5SR56</id>
    </interactant>
    <interactant intactId="EBI-12195227">
        <id>Q8NBD8</id>
        <label>TMEM229B</label>
    </interactant>
    <organismsDiffer>false</organismsDiffer>
    <experiments>3</experiments>
</comment>
<comment type="interaction">
    <interactant intactId="EBI-373355">
        <id>Q5SR56</id>
    </interactant>
    <interactant intactId="EBI-11528917">
        <id>Q8WW34-2</id>
        <label>TMEM239</label>
    </interactant>
    <organismsDiffer>false</organismsDiffer>
    <experiments>3</experiments>
</comment>
<comment type="interaction">
    <interactant intactId="EBI-373355">
        <id>Q5SR56</id>
    </interactant>
    <interactant intactId="EBI-6447886">
        <id>Q9Y320</id>
        <label>TMX2</label>
    </interactant>
    <organismsDiffer>false</organismsDiffer>
    <experiments>3</experiments>
</comment>
<comment type="interaction">
    <interactant intactId="EBI-373355">
        <id>Q5SR56</id>
    </interactant>
    <interactant intactId="EBI-17249488">
        <id>Q6ZUI0</id>
        <label>TPRG1</label>
    </interactant>
    <organismsDiffer>false</organismsDiffer>
    <experiments>3</experiments>
</comment>
<comment type="interaction">
    <interactant intactId="EBI-373355">
        <id>Q5SR56</id>
    </interactant>
    <interactant intactId="EBI-16746122">
        <id>Q9NSU2-1</id>
        <label>TREX1</label>
    </interactant>
    <organismsDiffer>false</organismsDiffer>
    <experiments>3</experiments>
</comment>
<comment type="interaction">
    <interactant intactId="EBI-373355">
        <id>Q5SR56</id>
    </interactant>
    <interactant intactId="EBI-12003468">
        <id>A0AVG3</id>
        <label>TSNARE1</label>
    </interactant>
    <organismsDiffer>false</organismsDiffer>
    <experiments>3</experiments>
</comment>
<comment type="interaction">
    <interactant intactId="EBI-373355">
        <id>Q5SR56</id>
    </interactant>
    <interactant intactId="EBI-11988865">
        <id>A5PKU2</id>
        <label>TUSC5</label>
    </interactant>
    <organismsDiffer>false</organismsDiffer>
    <experiments>3</experiments>
</comment>
<comment type="interaction">
    <interactant intactId="EBI-373355">
        <id>Q5SR56</id>
    </interactant>
    <interactant intactId="EBI-988826">
        <id>Q9Y385</id>
        <label>UBE2J1</label>
    </interactant>
    <organismsDiffer>false</organismsDiffer>
    <experiments>3</experiments>
</comment>
<comment type="interaction">
    <interactant intactId="EBI-373355">
        <id>Q5SR56</id>
    </interactant>
    <interactant intactId="EBI-7601760">
        <id>Q53HI1</id>
        <label>UNC50</label>
    </interactant>
    <organismsDiffer>false</organismsDiffer>
    <experiments>3</experiments>
</comment>
<comment type="interaction">
    <interactant intactId="EBI-373355">
        <id>Q5SR56</id>
    </interactant>
    <interactant intactId="EBI-742842">
        <id>Q9NZ43</id>
        <label>USE1</label>
    </interactant>
    <organismsDiffer>false</organismsDiffer>
    <experiments>3</experiments>
</comment>
<comment type="interaction">
    <interactant intactId="EBI-373355">
        <id>Q5SR56</id>
    </interactant>
    <interactant intactId="EBI-7850136">
        <id>Q9Y548</id>
        <label>YIPF1</label>
    </interactant>
    <organismsDiffer>false</organismsDiffer>
    <experiments>3</experiments>
</comment>
<comment type="interaction">
    <interactant intactId="EBI-373355">
        <id>Q5SR56</id>
    </interactant>
    <interactant intactId="EBI-751204">
        <id>Q9BWQ6</id>
        <label>YIPF2</label>
    </interactant>
    <organismsDiffer>false</organismsDiffer>
    <experiments>3</experiments>
</comment>
<comment type="interaction">
    <interactant intactId="EBI-373355">
        <id>Q5SR56</id>
    </interactant>
    <interactant intactId="EBI-751253">
        <id>Q9BSR8</id>
        <label>YIPF4</label>
    </interactant>
    <organismsDiffer>false</organismsDiffer>
    <experiments>3</experiments>
</comment>
<comment type="interaction">
    <interactant intactId="EBI-373355">
        <id>Q5SR56</id>
    </interactant>
    <interactant intactId="EBI-751210">
        <id>Q96EC8</id>
        <label>YIPF6</label>
    </interactant>
    <organismsDiffer>false</organismsDiffer>
    <experiments>3</experiments>
</comment>
<comment type="interaction">
    <interactant intactId="EBI-373355">
        <id>Q5SR56</id>
    </interactant>
    <interactant intactId="EBI-10254561">
        <id>Q6UX98</id>
        <label>ZDHHC24</label>
    </interactant>
    <organismsDiffer>false</organismsDiffer>
    <experiments>3</experiments>
</comment>
<comment type="interaction">
    <interactant intactId="EBI-373355">
        <id>Q5SR56</id>
    </interactant>
    <interactant intactId="EBI-718439">
        <id>O95159</id>
        <label>ZFPL1</label>
    </interactant>
    <organismsDiffer>false</organismsDiffer>
    <experiments>3</experiments>
</comment>
<comment type="subcellular location">
    <subcellularLocation>
        <location evidence="5">Membrane</location>
        <topology evidence="5">Multi-pass membrane protein</topology>
    </subcellularLocation>
</comment>
<comment type="alternative products">
    <event type="alternative splicing"/>
    <isoform>
        <id>Q5SR56-1</id>
        <name>1</name>
        <sequence type="displayed"/>
    </isoform>
    <isoform>
        <id>Q5SR56-2</id>
        <name>2</name>
        <sequence type="described" ref="VSP_056692 VSP_056693 VSP_056694"/>
    </isoform>
</comment>
<comment type="similarity">
    <text evidence="5">Belongs to the major facilitator superfamily.</text>
</comment>
<comment type="sequence caution" evidence="5">
    <conflict type="erroneous initiation">
        <sequence resource="EMBL-CDS" id="AAI06063"/>
    </conflict>
</comment>
<comment type="sequence caution" evidence="5">
    <conflict type="erroneous initiation">
        <sequence resource="EMBL-CDS" id="BAB55274"/>
    </conflict>
</comment>
<comment type="sequence caution" evidence="5">
    <conflict type="erroneous initiation">
        <sequence resource="EMBL-CDS" id="BAD96556"/>
    </conflict>
</comment>